<protein>
    <recommendedName>
        <fullName>Cytochrome c oxidase subunit 2</fullName>
        <ecNumber>7.1.1.9</ecNumber>
    </recommendedName>
    <alternativeName>
        <fullName>Cytochrome aa3 subunit 2</fullName>
    </alternativeName>
    <alternativeName>
        <fullName>Cytochrome c oxidase polypeptide II</fullName>
    </alternativeName>
    <alternativeName>
        <fullName>Oxidase aa(3) subunit 2</fullName>
    </alternativeName>
</protein>
<gene>
    <name type="primary">ctaC</name>
    <name type="synonym">coxII</name>
    <name type="synonym">ctaB</name>
</gene>
<keyword id="KW-0002">3D-structure</keyword>
<keyword id="KW-1003">Cell membrane</keyword>
<keyword id="KW-0186">Copper</keyword>
<keyword id="KW-0249">Electron transport</keyword>
<keyword id="KW-0472">Membrane</keyword>
<keyword id="KW-0479">Metal-binding</keyword>
<keyword id="KW-0679">Respiratory chain</keyword>
<keyword id="KW-0732">Signal</keyword>
<keyword id="KW-1278">Translocase</keyword>
<keyword id="KW-0812">Transmembrane</keyword>
<keyword id="KW-1133">Transmembrane helix</keyword>
<keyword id="KW-0813">Transport</keyword>
<evidence type="ECO:0000255" key="1"/>
<evidence type="ECO:0000305" key="2"/>
<evidence type="ECO:0007829" key="3">
    <source>
        <dbReference type="PDB" id="1M56"/>
    </source>
</evidence>
<evidence type="ECO:0007829" key="4">
    <source>
        <dbReference type="PDB" id="2GSM"/>
    </source>
</evidence>
<feature type="signal peptide" evidence="1">
    <location>
        <begin position="1"/>
        <end position="25"/>
    </location>
</feature>
<feature type="chain" id="PRO_0000006061" description="Cytochrome c oxidase subunit 2">
    <location>
        <begin position="26"/>
        <end position="303"/>
    </location>
</feature>
<feature type="transmembrane region" description="Helical" evidence="1">
    <location>
        <begin position="60"/>
        <end position="80"/>
    </location>
</feature>
<feature type="transmembrane region" description="Helical" evidence="1">
    <location>
        <begin position="104"/>
        <end position="124"/>
    </location>
</feature>
<feature type="binding site" evidence="2">
    <location>
        <position position="217"/>
    </location>
    <ligand>
        <name>Cu cation</name>
        <dbReference type="ChEBI" id="CHEBI:23378"/>
        <label>A</label>
    </ligand>
</feature>
<feature type="binding site" evidence="2">
    <location>
        <position position="252"/>
    </location>
    <ligand>
        <name>Cu cation</name>
        <dbReference type="ChEBI" id="CHEBI:23378"/>
        <label>A</label>
    </ligand>
</feature>
<feature type="binding site" evidence="2">
    <location>
        <position position="256"/>
    </location>
    <ligand>
        <name>Cu cation</name>
        <dbReference type="ChEBI" id="CHEBI:23378"/>
        <label>A</label>
    </ligand>
</feature>
<feature type="binding site" evidence="2">
    <location>
        <position position="260"/>
    </location>
    <ligand>
        <name>Cu cation</name>
        <dbReference type="ChEBI" id="CHEBI:23378"/>
        <label>A</label>
    </ligand>
</feature>
<feature type="strand" evidence="4">
    <location>
        <begin position="32"/>
        <end position="35"/>
    </location>
</feature>
<feature type="helix" evidence="4">
    <location>
        <begin position="49"/>
        <end position="82"/>
    </location>
</feature>
<feature type="turn" evidence="4">
    <location>
        <begin position="85"/>
        <end position="87"/>
    </location>
</feature>
<feature type="helix" evidence="4">
    <location>
        <begin position="98"/>
        <end position="127"/>
    </location>
</feature>
<feature type="strand" evidence="4">
    <location>
        <begin position="133"/>
        <end position="141"/>
    </location>
</feature>
<feature type="strand" evidence="4">
    <location>
        <begin position="144"/>
        <end position="148"/>
    </location>
</feature>
<feature type="turn" evidence="4">
    <location>
        <begin position="150"/>
        <end position="152"/>
    </location>
</feature>
<feature type="strand" evidence="4">
    <location>
        <begin position="155"/>
        <end position="158"/>
    </location>
</feature>
<feature type="helix" evidence="4">
    <location>
        <begin position="164"/>
        <end position="166"/>
    </location>
</feature>
<feature type="helix" evidence="4">
    <location>
        <begin position="174"/>
        <end position="182"/>
    </location>
</feature>
<feature type="helix" evidence="4">
    <location>
        <begin position="187"/>
        <end position="189"/>
    </location>
</feature>
<feature type="turn" evidence="4">
    <location>
        <begin position="190"/>
        <end position="192"/>
    </location>
</feature>
<feature type="strand" evidence="4">
    <location>
        <begin position="194"/>
        <end position="196"/>
    </location>
</feature>
<feature type="strand" evidence="4">
    <location>
        <begin position="198"/>
        <end position="201"/>
    </location>
</feature>
<feature type="strand" evidence="4">
    <location>
        <begin position="204"/>
        <end position="215"/>
    </location>
</feature>
<feature type="strand" evidence="4">
    <location>
        <begin position="217"/>
        <end position="221"/>
    </location>
</feature>
<feature type="helix" evidence="4">
    <location>
        <begin position="222"/>
        <end position="224"/>
    </location>
</feature>
<feature type="strand" evidence="4">
    <location>
        <begin position="226"/>
        <end position="230"/>
    </location>
</feature>
<feature type="strand" evidence="4">
    <location>
        <begin position="236"/>
        <end position="241"/>
    </location>
</feature>
<feature type="strand" evidence="4">
    <location>
        <begin position="246"/>
        <end position="250"/>
    </location>
</feature>
<feature type="helix" evidence="4">
    <location>
        <begin position="260"/>
        <end position="262"/>
    </location>
</feature>
<feature type="strand" evidence="4">
    <location>
        <begin position="265"/>
        <end position="270"/>
    </location>
</feature>
<feature type="helix" evidence="4">
    <location>
        <begin position="272"/>
        <end position="281"/>
    </location>
</feature>
<feature type="helix" evidence="3">
    <location>
        <begin position="282"/>
        <end position="284"/>
    </location>
</feature>
<sequence length="303" mass="32931">MRHSTTLTGCATGAAGLLAATAAAAQQQSLEIIGRPQPGGTGFQPSASPVATQIHWLDGFILVIIAAITIFVTLLILYAVWRFHEKRNKVPARFTHNSPLEIAWTIVPIVILVAIGAFSLPVLFNQQEIPEADVTVKVTGYQWYWGYEYPDEEISFESYMIGSPATGGDNRMSPEVEQQLIEAGYSRDEFLLATDTAMVVPVNKTVVVQVTGADVIHSWTVPAFGVKQDAVPGRLAQLWFRAEREGIFFGQCSELCGISHAYMPITVKVVSEEAYAAWLEQARGGTYELSSVLPATPAGVSVE</sequence>
<reference key="1">
    <citation type="journal article" date="1991" name="Gene">
        <title>The gene encoding cytochrome c oxidase subunit II from Rhodobacter sphaeroides; comparison of the deduced amino acid sequence with sequences of corresponding peptides from other species.</title>
        <authorList>
            <person name="Cao J."/>
            <person name="Shapleigh J."/>
            <person name="Gennis R."/>
            <person name="Revzin A."/>
            <person name="Ferguson-Miller S."/>
        </authorList>
    </citation>
    <scope>NUCLEOTIDE SEQUENCE [GENOMIC DNA]</scope>
</reference>
<reference key="2">
    <citation type="submission" date="2001-07" db="EMBL/GenBank/DDBJ databases">
        <authorList>
            <person name="Hiser C."/>
            <person name="Ferguson-Miller S."/>
        </authorList>
    </citation>
    <scope>SEQUENCE REVISION</scope>
</reference>
<dbReference type="EC" id="7.1.1.9"/>
<dbReference type="EMBL" id="M57680">
    <property type="protein sequence ID" value="AAA26100.3"/>
    <property type="molecule type" value="Genomic_DNA"/>
</dbReference>
<dbReference type="PIR" id="JQ1013">
    <property type="entry name" value="JQ1013"/>
</dbReference>
<dbReference type="PDB" id="1M56">
    <property type="method" value="X-ray"/>
    <property type="resolution" value="2.30 A"/>
    <property type="chains" value="B/H=26-289"/>
</dbReference>
<dbReference type="PDB" id="1M57">
    <property type="method" value="X-ray"/>
    <property type="resolution" value="3.00 A"/>
    <property type="chains" value="B/H=26-289"/>
</dbReference>
<dbReference type="PDB" id="2GSM">
    <property type="method" value="X-ray"/>
    <property type="resolution" value="2.00 A"/>
    <property type="chains" value="B/D=26-281"/>
</dbReference>
<dbReference type="PDB" id="3DTU">
    <property type="method" value="X-ray"/>
    <property type="resolution" value="2.15 A"/>
    <property type="chains" value="B/D=26-281"/>
</dbReference>
<dbReference type="PDB" id="3FYE">
    <property type="method" value="X-ray"/>
    <property type="resolution" value="2.15 A"/>
    <property type="chains" value="B/D=26-281"/>
</dbReference>
<dbReference type="PDB" id="3FYI">
    <property type="method" value="X-ray"/>
    <property type="resolution" value="2.20 A"/>
    <property type="chains" value="B/D=26-281"/>
</dbReference>
<dbReference type="PDB" id="5WEH">
    <property type="method" value="X-ray"/>
    <property type="resolution" value="3.45 A"/>
    <property type="chains" value="B/H=26-281"/>
</dbReference>
<dbReference type="PDB" id="6CI0">
    <property type="method" value="X-ray"/>
    <property type="resolution" value="2.40 A"/>
    <property type="chains" value="B/D=29-281"/>
</dbReference>
<dbReference type="PDBsum" id="1M56"/>
<dbReference type="PDBsum" id="1M57"/>
<dbReference type="PDBsum" id="2GSM"/>
<dbReference type="PDBsum" id="3DTU"/>
<dbReference type="PDBsum" id="3FYE"/>
<dbReference type="PDBsum" id="3FYI"/>
<dbReference type="PDBsum" id="5WEH"/>
<dbReference type="PDBsum" id="6CI0"/>
<dbReference type="SMR" id="Q03736"/>
<dbReference type="DIP" id="DIP-38012N"/>
<dbReference type="IntAct" id="Q03736">
    <property type="interactions" value="1"/>
</dbReference>
<dbReference type="DrugBank" id="DB03619">
    <property type="generic name" value="Deoxycholic acid"/>
</dbReference>
<dbReference type="TCDB" id="3.D.4.6.2">
    <property type="family name" value="the proton-translocating cytochrome oxidase (cox) superfamily"/>
</dbReference>
<dbReference type="EvolutionaryTrace" id="Q03736"/>
<dbReference type="GO" id="GO:0005886">
    <property type="term" value="C:plasma membrane"/>
    <property type="evidence" value="ECO:0007669"/>
    <property type="project" value="UniProtKB-SubCell"/>
</dbReference>
<dbReference type="GO" id="GO:0005507">
    <property type="term" value="F:copper ion binding"/>
    <property type="evidence" value="ECO:0007669"/>
    <property type="project" value="InterPro"/>
</dbReference>
<dbReference type="GO" id="GO:0004129">
    <property type="term" value="F:cytochrome-c oxidase activity"/>
    <property type="evidence" value="ECO:0007669"/>
    <property type="project" value="UniProtKB-EC"/>
</dbReference>
<dbReference type="GO" id="GO:0042773">
    <property type="term" value="P:ATP synthesis coupled electron transport"/>
    <property type="evidence" value="ECO:0007669"/>
    <property type="project" value="TreeGrafter"/>
</dbReference>
<dbReference type="Gene3D" id="1.10.287.90">
    <property type="match status" value="1"/>
</dbReference>
<dbReference type="Gene3D" id="2.60.40.420">
    <property type="entry name" value="Cupredoxins - blue copper proteins"/>
    <property type="match status" value="1"/>
</dbReference>
<dbReference type="InterPro" id="IPR045187">
    <property type="entry name" value="CcO_II"/>
</dbReference>
<dbReference type="InterPro" id="IPR002429">
    <property type="entry name" value="CcO_II-like_C"/>
</dbReference>
<dbReference type="InterPro" id="IPR001505">
    <property type="entry name" value="Copper_CuA"/>
</dbReference>
<dbReference type="InterPro" id="IPR008972">
    <property type="entry name" value="Cupredoxin"/>
</dbReference>
<dbReference type="InterPro" id="IPR014222">
    <property type="entry name" value="Cyt_c_oxidase_su2"/>
</dbReference>
<dbReference type="InterPro" id="IPR011759">
    <property type="entry name" value="Cyt_c_oxidase_su2_TM_dom"/>
</dbReference>
<dbReference type="InterPro" id="IPR036257">
    <property type="entry name" value="Cyt_c_oxidase_su2_TM_sf"/>
</dbReference>
<dbReference type="NCBIfam" id="TIGR02866">
    <property type="entry name" value="CoxB"/>
    <property type="match status" value="1"/>
</dbReference>
<dbReference type="PANTHER" id="PTHR22888:SF9">
    <property type="entry name" value="CYTOCHROME C OXIDASE SUBUNIT 2"/>
    <property type="match status" value="1"/>
</dbReference>
<dbReference type="PANTHER" id="PTHR22888">
    <property type="entry name" value="CYTOCHROME C OXIDASE, SUBUNIT II"/>
    <property type="match status" value="1"/>
</dbReference>
<dbReference type="Pfam" id="PF00116">
    <property type="entry name" value="COX2"/>
    <property type="match status" value="1"/>
</dbReference>
<dbReference type="Pfam" id="PF02790">
    <property type="entry name" value="COX2_TM"/>
    <property type="match status" value="1"/>
</dbReference>
<dbReference type="PRINTS" id="PR01166">
    <property type="entry name" value="CYCOXIDASEII"/>
</dbReference>
<dbReference type="SUPFAM" id="SSF49503">
    <property type="entry name" value="Cupredoxins"/>
    <property type="match status" value="1"/>
</dbReference>
<dbReference type="SUPFAM" id="SSF81464">
    <property type="entry name" value="Cytochrome c oxidase subunit II-like, transmembrane region"/>
    <property type="match status" value="1"/>
</dbReference>
<dbReference type="PROSITE" id="PS00078">
    <property type="entry name" value="COX2"/>
    <property type="match status" value="1"/>
</dbReference>
<dbReference type="PROSITE" id="PS50857">
    <property type="entry name" value="COX2_CUA"/>
    <property type="match status" value="1"/>
</dbReference>
<dbReference type="PROSITE" id="PS50999">
    <property type="entry name" value="COX2_TM"/>
    <property type="match status" value="1"/>
</dbReference>
<accession>Q03736</accession>
<proteinExistence type="evidence at protein level"/>
<organism>
    <name type="scientific">Cereibacter sphaeroides</name>
    <name type="common">Rhodobacter sphaeroides</name>
    <dbReference type="NCBI Taxonomy" id="1063"/>
    <lineage>
        <taxon>Bacteria</taxon>
        <taxon>Pseudomonadati</taxon>
        <taxon>Pseudomonadota</taxon>
        <taxon>Alphaproteobacteria</taxon>
        <taxon>Rhodobacterales</taxon>
        <taxon>Paracoccaceae</taxon>
        <taxon>Cereibacter</taxon>
    </lineage>
</organism>
<name>COX2_CERSP</name>
<comment type="function">
    <text>Subunits I and II form the functional core of the enzyme complex. Electrons originating in cytochrome c are transferred via heme a and Cu(A) to the binuclear center formed by heme a3 and Cu(B).</text>
</comment>
<comment type="catalytic activity">
    <reaction>
        <text>4 Fe(II)-[cytochrome c] + O2 + 8 H(+)(in) = 4 Fe(III)-[cytochrome c] + 2 H2O + 4 H(+)(out)</text>
        <dbReference type="Rhea" id="RHEA:11436"/>
        <dbReference type="Rhea" id="RHEA-COMP:10350"/>
        <dbReference type="Rhea" id="RHEA-COMP:14399"/>
        <dbReference type="ChEBI" id="CHEBI:15377"/>
        <dbReference type="ChEBI" id="CHEBI:15378"/>
        <dbReference type="ChEBI" id="CHEBI:15379"/>
        <dbReference type="ChEBI" id="CHEBI:29033"/>
        <dbReference type="ChEBI" id="CHEBI:29034"/>
        <dbReference type="EC" id="7.1.1.9"/>
    </reaction>
</comment>
<comment type="cofactor">
    <cofactor>
        <name>Cu cation</name>
        <dbReference type="ChEBI" id="CHEBI:23378"/>
    </cofactor>
    <text>Binds a copper A center.</text>
</comment>
<comment type="interaction">
    <interactant intactId="EBI-1033998">
        <id>Q03736</id>
    </interactant>
    <interactant intactId="EBI-1034008">
        <id>P33517</id>
        <label>ctaD</label>
    </interactant>
    <organismsDiffer>false</organismsDiffer>
    <experiments>3</experiments>
</comment>
<comment type="subcellular location">
    <subcellularLocation>
        <location>Cell membrane</location>
        <topology>Multi-pass membrane protein</topology>
    </subcellularLocation>
</comment>
<comment type="similarity">
    <text evidence="2">Belongs to the cytochrome c oxidase subunit 2 family.</text>
</comment>